<sequence>MNKRDYMNTSVQEPPLDYSFRSIHVIQDLVNEEPRTGLRPLKRSKSGKSLTQSLWLNNNVLNDLRDFNQVASQLLEHPENLAWIDLSFNDLTSIDPVLTTFFNLSVLYLHGNSIQHLGEVNKLAVLPRLRSLTLHGNPMEEEKGYRQYVLCTLPHITTFDFSGVTKADRTTAEVWKRMNIKPKKARIKQNTL</sequence>
<proteinExistence type="evidence at transcript level"/>
<dbReference type="EMBL" id="EU627085">
    <property type="protein sequence ID" value="ACF40895.1"/>
    <property type="molecule type" value="mRNA"/>
</dbReference>
<dbReference type="EMBL" id="EU627086">
    <property type="protein sequence ID" value="ACF40896.1"/>
    <property type="molecule type" value="mRNA"/>
</dbReference>
<dbReference type="SMR" id="B6CZ54"/>
<dbReference type="Proteomes" id="UP000233160">
    <property type="component" value="Unassembled WGS sequence"/>
</dbReference>
<dbReference type="GO" id="GO:0005737">
    <property type="term" value="C:cytoplasm"/>
    <property type="evidence" value="ECO:0007669"/>
    <property type="project" value="UniProtKB-SubCell"/>
</dbReference>
<dbReference type="Gene3D" id="3.80.10.10">
    <property type="entry name" value="Ribonuclease Inhibitor"/>
    <property type="match status" value="1"/>
</dbReference>
<dbReference type="InterPro" id="IPR001611">
    <property type="entry name" value="Leu-rich_rpt"/>
</dbReference>
<dbReference type="InterPro" id="IPR032675">
    <property type="entry name" value="LRR_dom_sf"/>
</dbReference>
<dbReference type="PANTHER" id="PTHR46545">
    <property type="entry name" value="LEUCINE-RICH REPEAT-CONTAINING PROTEIN 51"/>
    <property type="match status" value="1"/>
</dbReference>
<dbReference type="PANTHER" id="PTHR46545:SF1">
    <property type="entry name" value="LEUCINE-RICH REPEAT-CONTAINING PROTEIN 51"/>
    <property type="match status" value="1"/>
</dbReference>
<dbReference type="Pfam" id="PF14580">
    <property type="entry name" value="LRR_9"/>
    <property type="match status" value="1"/>
</dbReference>
<dbReference type="SUPFAM" id="SSF52075">
    <property type="entry name" value="Outer arm dynein light chain 1"/>
    <property type="match status" value="1"/>
</dbReference>
<dbReference type="PROSITE" id="PS51450">
    <property type="entry name" value="LRR"/>
    <property type="match status" value="4"/>
</dbReference>
<gene>
    <name evidence="1" type="primary">LRRC51</name>
    <name evidence="4" type="synonym">LRTOMT</name>
</gene>
<keyword id="KW-0025">Alternative splicing</keyword>
<keyword id="KW-0963">Cytoplasm</keyword>
<keyword id="KW-0433">Leucine-rich repeat</keyword>
<keyword id="KW-1185">Reference proteome</keyword>
<keyword id="KW-0677">Repeat</keyword>
<reference evidence="5 6" key="1">
    <citation type="journal article" date="2008" name="Nat. Genet.">
        <title>Mutations of LRTOMT, a fusion gene with alternative reading frames, cause nonsyndromic deafness in humans.</title>
        <authorList>
            <person name="Ahmed Z.M."/>
            <person name="Masmoudi S."/>
            <person name="Kalay E."/>
            <person name="Belyantseva I.A."/>
            <person name="Mosrati M.A."/>
            <person name="Collin R.W.J."/>
            <person name="Riazuddin S."/>
            <person name="Hmani-Aifa M."/>
            <person name="Venselaar H."/>
            <person name="Kawar M.N."/>
            <person name="Tlili A."/>
            <person name="van der Zwaag B."/>
            <person name="Khan S.Y."/>
            <person name="Ayadi L."/>
            <person name="Riazuddin S.A."/>
            <person name="Morell R.J."/>
            <person name="Griffith A.J."/>
            <person name="Charfedine I."/>
            <person name="Caylan R."/>
            <person name="Oostrik J."/>
            <person name="Karaguzel A."/>
            <person name="Ghorbel A."/>
            <person name="Riazuddin S."/>
            <person name="Friedman T.B."/>
            <person name="Ayadi H."/>
            <person name="Kremer H."/>
        </authorList>
    </citation>
    <scope>NUCLEOTIDE SEQUENCE [MRNA] (ISOFORMS 1 AND 2)</scope>
    <source>
        <tissue evidence="6">Brain</tissue>
    </source>
</reference>
<accession>B6CZ54</accession>
<accession>B6CZ55</accession>
<feature type="chain" id="PRO_0000370743" description="Leucine-rich repeat-containing protein 51">
    <location>
        <begin position="1"/>
        <end position="192"/>
    </location>
</feature>
<feature type="repeat" description="LRR 1">
    <location>
        <begin position="49"/>
        <end position="71"/>
    </location>
</feature>
<feature type="repeat" description="LRR 2">
    <location>
        <begin position="80"/>
        <end position="101"/>
    </location>
</feature>
<feature type="repeat" description="LRR 3">
    <location>
        <begin position="103"/>
        <end position="124"/>
    </location>
</feature>
<feature type="domain" description="LRRCT">
    <location>
        <begin position="137"/>
        <end position="175"/>
    </location>
</feature>
<feature type="splice variant" id="VSP_053066" description="In isoform 2." evidence="4">
    <original>VIQDLVNEEPRTGLRPLKRSKSGKSLTQ</original>
    <variation>IIQGPNNFLQPECPLSSRQQHPAPGGGE</variation>
    <location>
        <begin position="25"/>
        <end position="52"/>
    </location>
</feature>
<feature type="splice variant" id="VSP_053067" description="In isoform 2." evidence="4">
    <location>
        <begin position="53"/>
        <end position="192"/>
    </location>
</feature>
<protein>
    <recommendedName>
        <fullName evidence="1">Leucine-rich repeat-containing protein 51</fullName>
    </recommendedName>
    <alternativeName>
        <fullName evidence="4">Protein LRTOMT1</fullName>
    </alternativeName>
</protein>
<organism>
    <name type="scientific">Propithecus coquereli</name>
    <name type="common">Coquerel's sifaka</name>
    <name type="synonym">Propithecus verreauxi coquereli</name>
    <dbReference type="NCBI Taxonomy" id="379532"/>
    <lineage>
        <taxon>Eukaryota</taxon>
        <taxon>Metazoa</taxon>
        <taxon>Chordata</taxon>
        <taxon>Craniata</taxon>
        <taxon>Vertebrata</taxon>
        <taxon>Euteleostomi</taxon>
        <taxon>Mammalia</taxon>
        <taxon>Eutheria</taxon>
        <taxon>Euarchontoglires</taxon>
        <taxon>Primates</taxon>
        <taxon>Strepsirrhini</taxon>
        <taxon>Lemuriformes</taxon>
        <taxon>Indriidae</taxon>
        <taxon>Propithecus</taxon>
    </lineage>
</organism>
<evidence type="ECO:0000250" key="1">
    <source>
        <dbReference type="UniProtKB" id="Q96E66"/>
    </source>
</evidence>
<evidence type="ECO:0000250" key="2">
    <source>
        <dbReference type="UniProtKB" id="Q9DAK8"/>
    </source>
</evidence>
<evidence type="ECO:0000269" key="3">
    <source>
    </source>
</evidence>
<evidence type="ECO:0000303" key="4">
    <source>
    </source>
</evidence>
<evidence type="ECO:0000305" key="5"/>
<evidence type="ECO:0000312" key="6">
    <source>
        <dbReference type="EMBL" id="ACF40895.1"/>
    </source>
</evidence>
<comment type="subcellular location">
    <subcellularLocation>
        <location evidence="2">Cytoplasm</location>
    </subcellularLocation>
</comment>
<comment type="alternative products">
    <event type="alternative splicing"/>
    <isoform>
        <id>B6CZ54-1</id>
        <name evidence="3">1</name>
        <name evidence="3">A</name>
        <sequence type="displayed"/>
    </isoform>
    <isoform>
        <id>B6CZ54-2</id>
        <name evidence="3">2</name>
        <name evidence="3">B</name>
        <sequence type="described" ref="VSP_053066 VSP_053067"/>
    </isoform>
</comment>
<comment type="miscellaneous">
    <text evidence="4">LRRC51 and TOMT were originally considered as alternative reading frames, LRTOMT1 and LRTOMT2 of the same LRTOMT gene in primates.</text>
</comment>
<name>LRC51_PROCO</name>